<feature type="chain" id="PRO_1000073611" description="Serine/threonine transporter SstT">
    <location>
        <begin position="1"/>
        <end position="414"/>
    </location>
</feature>
<feature type="transmembrane region" description="Helical" evidence="1">
    <location>
        <begin position="19"/>
        <end position="39"/>
    </location>
</feature>
<feature type="transmembrane region" description="Helical" evidence="1">
    <location>
        <begin position="55"/>
        <end position="75"/>
    </location>
</feature>
<feature type="transmembrane region" description="Helical" evidence="1">
    <location>
        <begin position="89"/>
        <end position="109"/>
    </location>
</feature>
<feature type="transmembrane region" description="Helical" evidence="1">
    <location>
        <begin position="148"/>
        <end position="168"/>
    </location>
</feature>
<feature type="transmembrane region" description="Helical" evidence="1">
    <location>
        <begin position="189"/>
        <end position="209"/>
    </location>
</feature>
<feature type="transmembrane region" description="Helical" evidence="1">
    <location>
        <begin position="223"/>
        <end position="243"/>
    </location>
</feature>
<feature type="transmembrane region" description="Helical" evidence="1">
    <location>
        <begin position="297"/>
        <end position="317"/>
    </location>
</feature>
<feature type="transmembrane region" description="Helical" evidence="1">
    <location>
        <begin position="323"/>
        <end position="343"/>
    </location>
</feature>
<feature type="transmembrane region" description="Helical" evidence="1">
    <location>
        <begin position="363"/>
        <end position="383"/>
    </location>
</feature>
<name>SSTT_ACTSZ</name>
<gene>
    <name evidence="1" type="primary">sstT</name>
    <name type="ordered locus">Asuc_0947</name>
</gene>
<organism>
    <name type="scientific">Actinobacillus succinogenes (strain ATCC 55618 / DSM 22257 / CCUG 43843 / 130Z)</name>
    <dbReference type="NCBI Taxonomy" id="339671"/>
    <lineage>
        <taxon>Bacteria</taxon>
        <taxon>Pseudomonadati</taxon>
        <taxon>Pseudomonadota</taxon>
        <taxon>Gammaproteobacteria</taxon>
        <taxon>Pasteurellales</taxon>
        <taxon>Pasteurellaceae</taxon>
        <taxon>Actinobacillus</taxon>
    </lineage>
</organism>
<evidence type="ECO:0000255" key="1">
    <source>
        <dbReference type="HAMAP-Rule" id="MF_01582"/>
    </source>
</evidence>
<sequence length="414" mass="43082">MNTSRFISLFFHGSLVKRIIVGLVLGVVTALISPDLEPVLGFNLAEKVGILGSLFVKGLRAVAPILIFVLVIAAIANKKVGSKSNMKDIVMLYIIGTFGASIVAVLASFSFPMYIPLTTVADSLTPPNSVSEVFVVVISNIFANPIEALATSNFIGILAWAIALGIALRHAAQATKNAVNDLAEAVSKIVHLVISLAPFGIFGLVAATLADKGLGALWDYAHLLLVLLGSMLFMALVVNPFIVYWKIRRNPYPLVWKCISVSGLTAFFTRSSAANIPVNIDLAEELGLDEETYSVSIPLGATINMAGAAITVTVLTLAAVQTLGIPVSIPTAILLSVVSAVCACGASGVAGGSLLLIPLACSLFGISGDVAAQVIAVGFVIGVLQDSTETALNSSTDVLFTAAVCMAEERKNNA</sequence>
<dbReference type="EMBL" id="CP000746">
    <property type="protein sequence ID" value="ABR74315.1"/>
    <property type="molecule type" value="Genomic_DNA"/>
</dbReference>
<dbReference type="RefSeq" id="WP_012072692.1">
    <property type="nucleotide sequence ID" value="NC_009655.1"/>
</dbReference>
<dbReference type="SMR" id="A6VMW8"/>
<dbReference type="STRING" id="339671.Asuc_0947"/>
<dbReference type="KEGG" id="asu:Asuc_0947"/>
<dbReference type="eggNOG" id="COG3633">
    <property type="taxonomic scope" value="Bacteria"/>
</dbReference>
<dbReference type="HOGENOM" id="CLU_044581_0_0_6"/>
<dbReference type="OrthoDB" id="9768885at2"/>
<dbReference type="Proteomes" id="UP000001114">
    <property type="component" value="Chromosome"/>
</dbReference>
<dbReference type="GO" id="GO:0005886">
    <property type="term" value="C:plasma membrane"/>
    <property type="evidence" value="ECO:0007669"/>
    <property type="project" value="UniProtKB-SubCell"/>
</dbReference>
<dbReference type="GO" id="GO:0005295">
    <property type="term" value="F:neutral L-amino acid:sodium symporter activity"/>
    <property type="evidence" value="ECO:0007669"/>
    <property type="project" value="TreeGrafter"/>
</dbReference>
<dbReference type="GO" id="GO:0032329">
    <property type="term" value="P:serine transport"/>
    <property type="evidence" value="ECO:0007669"/>
    <property type="project" value="InterPro"/>
</dbReference>
<dbReference type="GO" id="GO:0015826">
    <property type="term" value="P:threonine transport"/>
    <property type="evidence" value="ECO:0007669"/>
    <property type="project" value="InterPro"/>
</dbReference>
<dbReference type="FunFam" id="1.10.3860.10:FF:000003">
    <property type="entry name" value="Serine/threonine transporter sstT"/>
    <property type="match status" value="1"/>
</dbReference>
<dbReference type="Gene3D" id="1.10.3860.10">
    <property type="entry name" value="Sodium:dicarboxylate symporter"/>
    <property type="match status" value="1"/>
</dbReference>
<dbReference type="HAMAP" id="MF_01582">
    <property type="entry name" value="Ser_Thr_transp_SstT"/>
    <property type="match status" value="1"/>
</dbReference>
<dbReference type="InterPro" id="IPR001991">
    <property type="entry name" value="Na-dicarboxylate_symporter"/>
</dbReference>
<dbReference type="InterPro" id="IPR036458">
    <property type="entry name" value="Na:dicarbo_symporter_sf"/>
</dbReference>
<dbReference type="InterPro" id="IPR023025">
    <property type="entry name" value="Ser_Thr_transp_SstT"/>
</dbReference>
<dbReference type="NCBIfam" id="NF010151">
    <property type="entry name" value="PRK13628.1"/>
    <property type="match status" value="1"/>
</dbReference>
<dbReference type="PANTHER" id="PTHR42865">
    <property type="entry name" value="PROTON/GLUTAMATE-ASPARTATE SYMPORTER"/>
    <property type="match status" value="1"/>
</dbReference>
<dbReference type="PANTHER" id="PTHR42865:SF8">
    <property type="entry name" value="SERINE_THREONINE TRANSPORTER SSTT"/>
    <property type="match status" value="1"/>
</dbReference>
<dbReference type="Pfam" id="PF00375">
    <property type="entry name" value="SDF"/>
    <property type="match status" value="1"/>
</dbReference>
<dbReference type="PRINTS" id="PR00173">
    <property type="entry name" value="EDTRNSPORT"/>
</dbReference>
<dbReference type="SUPFAM" id="SSF118215">
    <property type="entry name" value="Proton glutamate symport protein"/>
    <property type="match status" value="1"/>
</dbReference>
<proteinExistence type="inferred from homology"/>
<accession>A6VMW8</accession>
<reference key="1">
    <citation type="journal article" date="2010" name="BMC Genomics">
        <title>A genomic perspective on the potential of Actinobacillus succinogenes for industrial succinate production.</title>
        <authorList>
            <person name="McKinlay J.B."/>
            <person name="Laivenieks M."/>
            <person name="Schindler B.D."/>
            <person name="McKinlay A.A."/>
            <person name="Siddaramappa S."/>
            <person name="Challacombe J.F."/>
            <person name="Lowry S.R."/>
            <person name="Clum A."/>
            <person name="Lapidus A.L."/>
            <person name="Burkhart K.B."/>
            <person name="Harkins V."/>
            <person name="Vieille C."/>
        </authorList>
    </citation>
    <scope>NUCLEOTIDE SEQUENCE [LARGE SCALE GENOMIC DNA]</scope>
    <source>
        <strain>ATCC 55618 / DSM 22257 / CCUG 43843 / 130Z</strain>
    </source>
</reference>
<keyword id="KW-0029">Amino-acid transport</keyword>
<keyword id="KW-0997">Cell inner membrane</keyword>
<keyword id="KW-1003">Cell membrane</keyword>
<keyword id="KW-0472">Membrane</keyword>
<keyword id="KW-1185">Reference proteome</keyword>
<keyword id="KW-0769">Symport</keyword>
<keyword id="KW-0812">Transmembrane</keyword>
<keyword id="KW-1133">Transmembrane helix</keyword>
<keyword id="KW-0813">Transport</keyword>
<protein>
    <recommendedName>
        <fullName evidence="1">Serine/threonine transporter SstT</fullName>
    </recommendedName>
    <alternativeName>
        <fullName evidence="1">Na(+)/serine-threonine symporter</fullName>
    </alternativeName>
</protein>
<comment type="function">
    <text evidence="1">Involved in the import of serine and threonine into the cell, with the concomitant import of sodium (symport system).</text>
</comment>
<comment type="catalytic activity">
    <reaction evidence="1">
        <text>L-serine(in) + Na(+)(in) = L-serine(out) + Na(+)(out)</text>
        <dbReference type="Rhea" id="RHEA:29575"/>
        <dbReference type="ChEBI" id="CHEBI:29101"/>
        <dbReference type="ChEBI" id="CHEBI:33384"/>
    </reaction>
    <physiologicalReaction direction="right-to-left" evidence="1">
        <dbReference type="Rhea" id="RHEA:29577"/>
    </physiologicalReaction>
</comment>
<comment type="catalytic activity">
    <reaction evidence="1">
        <text>L-threonine(in) + Na(+)(in) = L-threonine(out) + Na(+)(out)</text>
        <dbReference type="Rhea" id="RHEA:69999"/>
        <dbReference type="ChEBI" id="CHEBI:29101"/>
        <dbReference type="ChEBI" id="CHEBI:57926"/>
    </reaction>
    <physiologicalReaction direction="right-to-left" evidence="1">
        <dbReference type="Rhea" id="RHEA:70001"/>
    </physiologicalReaction>
</comment>
<comment type="subcellular location">
    <subcellularLocation>
        <location evidence="1">Cell inner membrane</location>
        <topology evidence="1">Multi-pass membrane protein</topology>
    </subcellularLocation>
</comment>
<comment type="similarity">
    <text evidence="1">Belongs to the dicarboxylate/amino acid:cation symporter (DAACS) (TC 2.A.23) family.</text>
</comment>